<name>Y1316_BACMK</name>
<organism>
    <name type="scientific">Bacillus mycoides (strain KBAB4)</name>
    <name type="common">Bacillus weihenstephanensis</name>
    <dbReference type="NCBI Taxonomy" id="315730"/>
    <lineage>
        <taxon>Bacteria</taxon>
        <taxon>Bacillati</taxon>
        <taxon>Bacillota</taxon>
        <taxon>Bacilli</taxon>
        <taxon>Bacillales</taxon>
        <taxon>Bacillaceae</taxon>
        <taxon>Bacillus</taxon>
        <taxon>Bacillus cereus group</taxon>
    </lineage>
</organism>
<sequence length="79" mass="8431">MARIGVENSLTDVQQALQQQGHEVVSLNSENDAHGCDCCVVTGQDSNMMGIADTSIKGSVIKAHGLTTDEICQQVENRT</sequence>
<evidence type="ECO:0000255" key="1">
    <source>
        <dbReference type="HAMAP-Rule" id="MF_00506"/>
    </source>
</evidence>
<protein>
    <recommendedName>
        <fullName evidence="1">UPF0180 protein BcerKBAB4_1316</fullName>
    </recommendedName>
</protein>
<reference key="1">
    <citation type="journal article" date="2008" name="Chem. Biol. Interact.">
        <title>Extending the Bacillus cereus group genomics to putative food-borne pathogens of different toxicity.</title>
        <authorList>
            <person name="Lapidus A."/>
            <person name="Goltsman E."/>
            <person name="Auger S."/>
            <person name="Galleron N."/>
            <person name="Segurens B."/>
            <person name="Dossat C."/>
            <person name="Land M.L."/>
            <person name="Broussolle V."/>
            <person name="Brillard J."/>
            <person name="Guinebretiere M.-H."/>
            <person name="Sanchis V."/>
            <person name="Nguen-the C."/>
            <person name="Lereclus D."/>
            <person name="Richardson P."/>
            <person name="Wincker P."/>
            <person name="Weissenbach J."/>
            <person name="Ehrlich S.D."/>
            <person name="Sorokin A."/>
        </authorList>
    </citation>
    <scope>NUCLEOTIDE SEQUENCE [LARGE SCALE GENOMIC DNA]</scope>
    <source>
        <strain>KBAB4</strain>
    </source>
</reference>
<accession>A9VKX8</accession>
<proteinExistence type="inferred from homology"/>
<comment type="similarity">
    <text evidence="1">Belongs to the UPF0180 family.</text>
</comment>
<gene>
    <name type="ordered locus">BcerKBAB4_1316</name>
</gene>
<feature type="chain" id="PRO_1000127038" description="UPF0180 protein BcerKBAB4_1316">
    <location>
        <begin position="1"/>
        <end position="79"/>
    </location>
</feature>
<dbReference type="EMBL" id="CP000903">
    <property type="protein sequence ID" value="ABY42563.1"/>
    <property type="molecule type" value="Genomic_DNA"/>
</dbReference>
<dbReference type="RefSeq" id="WP_002011725.1">
    <property type="nucleotide sequence ID" value="NC_010184.1"/>
</dbReference>
<dbReference type="KEGG" id="bwe:BcerKBAB4_1316"/>
<dbReference type="eggNOG" id="ENOG503307C">
    <property type="taxonomic scope" value="Bacteria"/>
</dbReference>
<dbReference type="HOGENOM" id="CLU_187365_0_0_9"/>
<dbReference type="Proteomes" id="UP000002154">
    <property type="component" value="Chromosome"/>
</dbReference>
<dbReference type="HAMAP" id="MF_00506">
    <property type="entry name" value="UPF0180"/>
    <property type="match status" value="1"/>
</dbReference>
<dbReference type="InterPro" id="IPR005370">
    <property type="entry name" value="UPF0180"/>
</dbReference>
<dbReference type="NCBIfam" id="NF002845">
    <property type="entry name" value="PRK03094.1"/>
    <property type="match status" value="1"/>
</dbReference>
<dbReference type="Pfam" id="PF03698">
    <property type="entry name" value="UPF0180"/>
    <property type="match status" value="1"/>
</dbReference>